<keyword id="KW-1185">Reference proteome</keyword>
<organism>
    <name type="scientific">Mycobacterium phage L5</name>
    <name type="common">Mycobacteriophage L5</name>
    <dbReference type="NCBI Taxonomy" id="31757"/>
    <lineage>
        <taxon>Viruses</taxon>
        <taxon>Duplodnaviria</taxon>
        <taxon>Heunggongvirae</taxon>
        <taxon>Uroviricota</taxon>
        <taxon>Caudoviricetes</taxon>
        <taxon>Fromanvirus</taxon>
    </lineage>
</organism>
<name>VG01_BPML5</name>
<gene>
    <name type="primary">1</name>
</gene>
<sequence length="229" mass="26475">MHGTRSSAHWSTQPGKFDVLNLRMTFESSSAYEIPDLRPTDFVPAYLAAWNMPRHRDYAAKNGGALHFFLDDYRFETAWSSPERLLDRVKQVGAALTPDFSLWTNMPKAAQLWNVYRSRWCGAYWQSEGIEVIPTACWATPDTFDFCFDGIPMGSTVAISSMGIRSSKVDQELFRYGLRELIDRTQPQLLLAYGQLRHCDDMDLPEVREYPTYWDRRRKWVTADGRPGK</sequence>
<proteinExistence type="predicted"/>
<reference key="1">
    <citation type="journal article" date="1993" name="Mol. Microbiol.">
        <title>DNA sequence, structure and gene expression of mycobacteriophage L5: a phage system for mycobacterial genetics.</title>
        <authorList>
            <person name="Hatfull G.F."/>
            <person name="Sarkis G.J."/>
        </authorList>
    </citation>
    <scope>NUCLEOTIDE SEQUENCE [LARGE SCALE GENOMIC DNA]</scope>
</reference>
<accession>Q05218</accession>
<dbReference type="EMBL" id="Z18946">
    <property type="protein sequence ID" value="CAA79380.1"/>
    <property type="molecule type" value="Genomic_DNA"/>
</dbReference>
<dbReference type="PIR" id="S30949">
    <property type="entry name" value="S30949"/>
</dbReference>
<dbReference type="RefSeq" id="NP_039668.1">
    <property type="nucleotide sequence ID" value="NC_001335.1"/>
</dbReference>
<dbReference type="GeneID" id="2942953"/>
<dbReference type="KEGG" id="vg:2942953"/>
<dbReference type="OrthoDB" id="6594at10239"/>
<dbReference type="Proteomes" id="UP000002123">
    <property type="component" value="Genome"/>
</dbReference>
<dbReference type="InterPro" id="IPR025530">
    <property type="entry name" value="DUF4417"/>
</dbReference>
<dbReference type="Pfam" id="PF14386">
    <property type="entry name" value="DUF4417"/>
    <property type="match status" value="1"/>
</dbReference>
<feature type="chain" id="PRO_0000164697" description="Gene 1 protein">
    <location>
        <begin position="1"/>
        <end position="229"/>
    </location>
</feature>
<organismHost>
    <name type="scientific">Mycobacterium</name>
    <dbReference type="NCBI Taxonomy" id="1763"/>
</organismHost>
<protein>
    <recommendedName>
        <fullName>Gene 1 protein</fullName>
    </recommendedName>
    <alternativeName>
        <fullName>Gp1</fullName>
    </alternativeName>
</protein>